<name>TMPS9_RAT</name>
<accession>P69526</accession>
<dbReference type="EC" id="3.4.21.-"/>
<dbReference type="EMBL" id="AABR03056045">
    <property type="status" value="NOT_ANNOTATED_CDS"/>
    <property type="molecule type" value="Genomic_DNA"/>
</dbReference>
<dbReference type="RefSeq" id="NP_001040565.2">
    <property type="nucleotide sequence ID" value="NM_001047100.2"/>
</dbReference>
<dbReference type="SMR" id="P69526"/>
<dbReference type="STRING" id="10116.ENSRNOP00000041782"/>
<dbReference type="MEROPS" id="S01.969"/>
<dbReference type="GlyCosmos" id="P69526">
    <property type="glycosylation" value="5 sites, No reported glycans"/>
</dbReference>
<dbReference type="GlyGen" id="P69526">
    <property type="glycosylation" value="10 sites"/>
</dbReference>
<dbReference type="PhosphoSitePlus" id="P69526"/>
<dbReference type="PaxDb" id="10116-ENSRNOP00000041782"/>
<dbReference type="UCSC" id="RGD:1309581">
    <property type="organism name" value="rat"/>
</dbReference>
<dbReference type="AGR" id="RGD:1309581"/>
<dbReference type="RGD" id="1309581">
    <property type="gene designation" value="Tmprss9"/>
</dbReference>
<dbReference type="VEuPathDB" id="HostDB:ENSRNOG00000032429"/>
<dbReference type="eggNOG" id="KOG3627">
    <property type="taxonomic scope" value="Eukaryota"/>
</dbReference>
<dbReference type="HOGENOM" id="CLU_004497_2_0_1"/>
<dbReference type="InParanoid" id="P69526"/>
<dbReference type="PhylomeDB" id="P69526"/>
<dbReference type="PRO" id="PR:P69526"/>
<dbReference type="Proteomes" id="UP000002494">
    <property type="component" value="Chromosome 7"/>
</dbReference>
<dbReference type="Bgee" id="ENSRNOG00000032429">
    <property type="expression patterns" value="Expressed in testis and 10 other cell types or tissues"/>
</dbReference>
<dbReference type="ExpressionAtlas" id="P69526">
    <property type="expression patterns" value="baseline and differential"/>
</dbReference>
<dbReference type="GO" id="GO:0005886">
    <property type="term" value="C:plasma membrane"/>
    <property type="evidence" value="ECO:0007669"/>
    <property type="project" value="UniProtKB-SubCell"/>
</dbReference>
<dbReference type="GO" id="GO:0004252">
    <property type="term" value="F:serine-type endopeptidase activity"/>
    <property type="evidence" value="ECO:0007669"/>
    <property type="project" value="InterPro"/>
</dbReference>
<dbReference type="GO" id="GO:0008236">
    <property type="term" value="F:serine-type peptidase activity"/>
    <property type="evidence" value="ECO:0000266"/>
    <property type="project" value="RGD"/>
</dbReference>
<dbReference type="GO" id="GO:0031639">
    <property type="term" value="P:plasminogen activation"/>
    <property type="evidence" value="ECO:0000266"/>
    <property type="project" value="RGD"/>
</dbReference>
<dbReference type="GO" id="GO:0006508">
    <property type="term" value="P:proteolysis"/>
    <property type="evidence" value="ECO:0000266"/>
    <property type="project" value="RGD"/>
</dbReference>
<dbReference type="CDD" id="cd00112">
    <property type="entry name" value="LDLa"/>
    <property type="match status" value="1"/>
</dbReference>
<dbReference type="CDD" id="cd00190">
    <property type="entry name" value="Tryp_SPc"/>
    <property type="match status" value="3"/>
</dbReference>
<dbReference type="FunFam" id="2.40.10.10:FF:000003">
    <property type="entry name" value="Transmembrane serine protease 3"/>
    <property type="match status" value="3"/>
</dbReference>
<dbReference type="Gene3D" id="4.10.400.10">
    <property type="entry name" value="Low-density Lipoprotein Receptor"/>
    <property type="match status" value="1"/>
</dbReference>
<dbReference type="Gene3D" id="2.40.10.10">
    <property type="entry name" value="Trypsin-like serine proteases"/>
    <property type="match status" value="4"/>
</dbReference>
<dbReference type="InterPro" id="IPR036055">
    <property type="entry name" value="LDL_receptor-like_sf"/>
</dbReference>
<dbReference type="InterPro" id="IPR002172">
    <property type="entry name" value="LDrepeatLR_classA_rpt"/>
</dbReference>
<dbReference type="InterPro" id="IPR009003">
    <property type="entry name" value="Peptidase_S1_PA"/>
</dbReference>
<dbReference type="InterPro" id="IPR043504">
    <property type="entry name" value="Peptidase_S1_PA_chymotrypsin"/>
</dbReference>
<dbReference type="InterPro" id="IPR001314">
    <property type="entry name" value="Peptidase_S1A"/>
</dbReference>
<dbReference type="InterPro" id="IPR017324">
    <property type="entry name" value="Tmprss9"/>
</dbReference>
<dbReference type="InterPro" id="IPR001254">
    <property type="entry name" value="Trypsin_dom"/>
</dbReference>
<dbReference type="InterPro" id="IPR018114">
    <property type="entry name" value="TRYPSIN_HIS"/>
</dbReference>
<dbReference type="InterPro" id="IPR033116">
    <property type="entry name" value="TRYPSIN_SER"/>
</dbReference>
<dbReference type="PANTHER" id="PTHR24252">
    <property type="entry name" value="ACROSIN-RELATED"/>
    <property type="match status" value="1"/>
</dbReference>
<dbReference type="PANTHER" id="PTHR24252:SF26">
    <property type="entry name" value="TRANSMEMBRANE SERINE PROTEASE 9"/>
    <property type="match status" value="1"/>
</dbReference>
<dbReference type="Pfam" id="PF00057">
    <property type="entry name" value="Ldl_recept_a"/>
    <property type="match status" value="1"/>
</dbReference>
<dbReference type="Pfam" id="PF00089">
    <property type="entry name" value="Trypsin"/>
    <property type="match status" value="3"/>
</dbReference>
<dbReference type="PIRSF" id="PIRSF037931">
    <property type="entry name" value="TMPRSS9_polyserase-1"/>
    <property type="match status" value="1"/>
</dbReference>
<dbReference type="PRINTS" id="PR00722">
    <property type="entry name" value="CHYMOTRYPSIN"/>
</dbReference>
<dbReference type="SMART" id="SM00192">
    <property type="entry name" value="LDLa"/>
    <property type="match status" value="1"/>
</dbReference>
<dbReference type="SMART" id="SM00020">
    <property type="entry name" value="Tryp_SPc"/>
    <property type="match status" value="3"/>
</dbReference>
<dbReference type="SUPFAM" id="SSF57424">
    <property type="entry name" value="LDL receptor-like module"/>
    <property type="match status" value="1"/>
</dbReference>
<dbReference type="SUPFAM" id="SSF50494">
    <property type="entry name" value="Trypsin-like serine proteases"/>
    <property type="match status" value="3"/>
</dbReference>
<dbReference type="PROSITE" id="PS01209">
    <property type="entry name" value="LDLRA_1"/>
    <property type="match status" value="1"/>
</dbReference>
<dbReference type="PROSITE" id="PS50068">
    <property type="entry name" value="LDLRA_2"/>
    <property type="match status" value="1"/>
</dbReference>
<dbReference type="PROSITE" id="PS50240">
    <property type="entry name" value="TRYPSIN_DOM"/>
    <property type="match status" value="3"/>
</dbReference>
<dbReference type="PROSITE" id="PS00134">
    <property type="entry name" value="TRYPSIN_HIS"/>
    <property type="match status" value="3"/>
</dbReference>
<dbReference type="PROSITE" id="PS00135">
    <property type="entry name" value="TRYPSIN_SER"/>
    <property type="match status" value="2"/>
</dbReference>
<evidence type="ECO:0000250" key="1"/>
<evidence type="ECO:0000255" key="2"/>
<evidence type="ECO:0000255" key="3">
    <source>
        <dbReference type="PROSITE-ProRule" id="PRU00124"/>
    </source>
</evidence>
<evidence type="ECO:0000255" key="4">
    <source>
        <dbReference type="PROSITE-ProRule" id="PRU00274"/>
    </source>
</evidence>
<evidence type="ECO:0000256" key="5">
    <source>
        <dbReference type="SAM" id="MobiDB-lite"/>
    </source>
</evidence>
<gene>
    <name type="primary">Tmprss9</name>
</gene>
<protein>
    <recommendedName>
        <fullName>Transmembrane protease serine 9</fullName>
        <ecNumber>3.4.21.-</ecNumber>
    </recommendedName>
    <alternativeName>
        <fullName>Polyserase-I</fullName>
    </alternativeName>
    <alternativeName>
        <fullName>Polyserine protease 1</fullName>
        <shortName>Polyserase-1</shortName>
    </alternativeName>
    <component>
        <recommendedName>
            <fullName>Serase-1</fullName>
        </recommendedName>
    </component>
    <component>
        <recommendedName>
            <fullName>Serase-2</fullName>
        </recommendedName>
    </component>
    <component>
        <recommendedName>
            <fullName>Serase-3</fullName>
        </recommendedName>
    </component>
</protein>
<comment type="function">
    <text evidence="1">Serase-1 and serase-2 are serine proteases that hydrolyze the peptides N-t-Boc-Gln-Ala-Arg-AMC and N-t-Boc-Gln-Gly-Arg-AMC. In contrast, N-t-Boc-Ala-Phe-Lys-AMC and N-t-Boc-Ala-Pro-Ala-AMC are not significantly hydrolyzed (By similarity).</text>
</comment>
<comment type="activity regulation">
    <text evidence="1">Inhibited by serine protease inhibitors PMSF and 4-(2-aminoethyl)benzenesulfonyl fluoride, but not by EDTA.</text>
</comment>
<comment type="subcellular location">
    <subcellularLocation>
        <location evidence="1">Cell membrane</location>
        <topology evidence="1">Single-pass type II membrane protein</topology>
    </subcellularLocation>
</comment>
<comment type="domain">
    <text evidence="1">The serine protease 1 and 2 domains are catalytically active, whereas the serine protease 3 domain lacks the essential Ser residue of the catalytic triad at position 1011 and is predicted to be inactive.</text>
</comment>
<comment type="PTM">
    <text evidence="1">Proteolytically cleaved to generate 3 independent serine protease chains. The cleaved chains may remain attached to the membrane thanks to disulfide bonds. It is unclear whether cleavage always takes place (By similarity).</text>
</comment>
<comment type="similarity">
    <text evidence="4">Belongs to the peptidase S1 family.</text>
</comment>
<keyword id="KW-1003">Cell membrane</keyword>
<keyword id="KW-0165">Cleavage on pair of basic residues</keyword>
<keyword id="KW-1015">Disulfide bond</keyword>
<keyword id="KW-0325">Glycoprotein</keyword>
<keyword id="KW-0378">Hydrolase</keyword>
<keyword id="KW-0472">Membrane</keyword>
<keyword id="KW-0645">Protease</keyword>
<keyword id="KW-1185">Reference proteome</keyword>
<keyword id="KW-0677">Repeat</keyword>
<keyword id="KW-0720">Serine protease</keyword>
<keyword id="KW-0735">Signal-anchor</keyword>
<keyword id="KW-0812">Transmembrane</keyword>
<keyword id="KW-1133">Transmembrane helix</keyword>
<feature type="chain" id="PRO_0000027875" description="Transmembrane protease serine 9" evidence="2">
    <location>
        <begin position="1"/>
        <end position="1061"/>
    </location>
</feature>
<feature type="chain" id="PRO_0000027876" description="Serase-1" evidence="2">
    <location>
        <begin position="205"/>
        <end position="505"/>
    </location>
</feature>
<feature type="chain" id="PRO_0000027877" description="Serase-2" evidence="2">
    <location>
        <begin position="506"/>
        <end position="829"/>
    </location>
</feature>
<feature type="chain" id="PRO_0000027878" description="Serase-3" evidence="2">
    <location>
        <begin position="804"/>
        <end position="1061"/>
    </location>
</feature>
<feature type="topological domain" description="Cytoplasmic" evidence="2">
    <location>
        <begin position="3"/>
        <end position="31"/>
    </location>
</feature>
<feature type="transmembrane region" description="Helical" evidence="2">
    <location>
        <begin position="32"/>
        <end position="52"/>
    </location>
</feature>
<feature type="topological domain" description="Extracellular" evidence="2">
    <location>
        <begin position="53"/>
        <end position="1061"/>
    </location>
</feature>
<feature type="domain" description="LDL-receptor class A" evidence="3">
    <location>
        <begin position="155"/>
        <end position="192"/>
    </location>
</feature>
<feature type="domain" description="Peptidase S1 1" evidence="4">
    <location>
        <begin position="205"/>
        <end position="438"/>
    </location>
</feature>
<feature type="domain" description="Peptidase S1 2" evidence="4">
    <location>
        <begin position="506"/>
        <end position="738"/>
    </location>
</feature>
<feature type="domain" description="Peptidase S1 3" evidence="4">
    <location>
        <begin position="830"/>
        <end position="1060"/>
    </location>
</feature>
<feature type="region of interest" description="Disordered" evidence="5">
    <location>
        <begin position="443"/>
        <end position="499"/>
    </location>
</feature>
<feature type="region of interest" description="Disordered" evidence="5">
    <location>
        <begin position="740"/>
        <end position="771"/>
    </location>
</feature>
<feature type="region of interest" description="Disordered" evidence="5">
    <location>
        <begin position="790"/>
        <end position="810"/>
    </location>
</feature>
<feature type="compositionally biased region" description="Pro residues" evidence="5">
    <location>
        <begin position="452"/>
        <end position="461"/>
    </location>
</feature>
<feature type="compositionally biased region" description="Low complexity" evidence="5">
    <location>
        <begin position="462"/>
        <end position="476"/>
    </location>
</feature>
<feature type="compositionally biased region" description="Low complexity" evidence="5">
    <location>
        <begin position="740"/>
        <end position="752"/>
    </location>
</feature>
<feature type="compositionally biased region" description="Low complexity" evidence="5">
    <location>
        <begin position="792"/>
        <end position="808"/>
    </location>
</feature>
<feature type="active site" description="Charge relay system" evidence="1">
    <location>
        <position position="245"/>
    </location>
</feature>
<feature type="active site" description="Charge relay system" evidence="1">
    <location>
        <position position="294"/>
    </location>
</feature>
<feature type="active site" description="Charge relay system" evidence="1">
    <location>
        <position position="389"/>
    </location>
</feature>
<feature type="active site" description="Charge relay system" evidence="1">
    <location>
        <position position="546"/>
    </location>
</feature>
<feature type="active site" description="Charge relay system" evidence="1">
    <location>
        <position position="594"/>
    </location>
</feature>
<feature type="active site" description="Charge relay system" evidence="1">
    <location>
        <position position="689"/>
    </location>
</feature>
<feature type="site" description="Cleavage" evidence="2">
    <location>
        <begin position="204"/>
        <end position="205"/>
    </location>
</feature>
<feature type="site" description="Cleavage" evidence="2">
    <location>
        <begin position="505"/>
        <end position="506"/>
    </location>
</feature>
<feature type="site" description="Cleavage" evidence="2">
    <location>
        <begin position="829"/>
        <end position="830"/>
    </location>
</feature>
<feature type="glycosylation site" description="N-linked (GlcNAc...) asparagine" evidence="2">
    <location>
        <position position="469"/>
    </location>
</feature>
<feature type="glycosylation site" description="N-linked (GlcNAc...) asparagine" evidence="2">
    <location>
        <position position="549"/>
    </location>
</feature>
<feature type="glycosylation site" description="N-linked (GlcNAc...) asparagine" evidence="2">
    <location>
        <position position="640"/>
    </location>
</feature>
<feature type="glycosylation site" description="N-linked (GlcNAc...) asparagine" evidence="2">
    <location>
        <position position="665"/>
    </location>
</feature>
<feature type="glycosylation site" description="N-linked (GlcNAc...) asparagine" evidence="2">
    <location>
        <position position="791"/>
    </location>
</feature>
<feature type="disulfide bond" evidence="1">
    <location>
        <begin position="156"/>
        <end position="168"/>
    </location>
</feature>
<feature type="disulfide bond" evidence="1">
    <location>
        <begin position="163"/>
        <end position="182"/>
    </location>
</feature>
<feature type="disulfide bond" evidence="1">
    <location>
        <begin position="176"/>
        <end position="191"/>
    </location>
</feature>
<feature type="disulfide bond" evidence="1">
    <location>
        <begin position="230"/>
        <end position="246"/>
    </location>
</feature>
<feature type="disulfide bond" evidence="1">
    <location>
        <begin position="328"/>
        <end position="395"/>
    </location>
</feature>
<feature type="disulfide bond" evidence="1">
    <location>
        <begin position="360"/>
        <end position="374"/>
    </location>
</feature>
<feature type="disulfide bond" evidence="1">
    <location>
        <begin position="385"/>
        <end position="414"/>
    </location>
</feature>
<feature type="disulfide bond" evidence="1">
    <location>
        <begin position="531"/>
        <end position="547"/>
    </location>
</feature>
<feature type="disulfide bond" evidence="1">
    <location>
        <begin position="628"/>
        <end position="695"/>
    </location>
</feature>
<feature type="disulfide bond" evidence="1">
    <location>
        <begin position="660"/>
        <end position="674"/>
    </location>
</feature>
<feature type="disulfide bond" evidence="1">
    <location>
        <begin position="685"/>
        <end position="714"/>
    </location>
</feature>
<feature type="disulfide bond" evidence="1">
    <location>
        <begin position="856"/>
        <end position="872"/>
    </location>
</feature>
<feature type="disulfide bond" evidence="1">
    <location>
        <begin position="951"/>
        <end position="1017"/>
    </location>
</feature>
<feature type="disulfide bond" evidence="1">
    <location>
        <begin position="982"/>
        <end position="996"/>
    </location>
</feature>
<feature type="disulfide bond" evidence="1">
    <location>
        <begin position="1007"/>
        <end position="1036"/>
    </location>
</feature>
<sequence length="1061" mass="113890">MEPAAPDLQPVPEVTKGVPVPTPDSGCCRAAVTTVVAISVASLTLGVLSAFLSAQGVQVEHTAQLHGVRFTSLLQQENSDFYRLLTPALQTLLHFLLRALQPLSLDQEADILQKGIQARLQGQGLSLAAYGTITSVELTGRCEGPVTERDLKSGHCPGNAFSCQNSQCVSKENPECDDRVDCSDGSDEAQCDCGWQPAWRSAGRIVGGAEAAPGEFPWQVSLRENHEHFCGATIIGARWLVSAAHCFNEFQDPAQWAAQAGSVHLSGSEASAVRARVLRIAKHPAYNADTADFDVAVLELARPLPFGRYVQPACLPAATHVFPPRKKCLISGWGYLKEDFLVKPEVLQKATVELLDQNLCSSLYGHSLTDRMVCAGYLDGKVDSCQGDSGGPLVCEEPSGRFFLAGVVSWGIGCAEARRPGVYTRVTRLRDWILEVTSSADTPVVPTEAPAPITPSTPWPTSPESRVPNTTAKPTVAPTPAPLHPSTAAKPQECGARPAMDKPTRIVGGISAVSGEVPWQASLKEGSRHFCGATVVGDRWLLSAAHCFNHTKLEQVQAHLGTVSLLGVGGSPVKLGLRSVALHPRYNPGILDFDVALLELAQPLVFNKYIQPVCLPLAIHKFPVGRKCMISGWGNMQEGNATKPDILQKASVGIIEQKMCGALYNFSLTDRMLCAGFLEGRVDSCQGDSGGPLACEETPGVFYLAGIVSWGIGCAQAKKPGVYARITRLKDWILKAMSSDPSSTAHPHTSSTRLIPSQPPTTTAAGLIPEASTGRPATLRATIRVTTRPLNTTLSARSTTTRRQTPAPGTTVFSHLPDCGLAPPGALTRIVGGSAASLGEWPWQVSLWLRRREHRCGAVLVAERWLLSAAHCFDVYGDPMQWAAFLGTPFLSSTEGQLERVARIYRHPFYNIYTLDYDVALLELAGPVRRSRLVRPICLPGPTRPPEGARCVITGWGSLREGGSMARQLQKAAVRVLSEQTCRRFYPVQISSRMLCAGFPQGGVDSCSGDAGGPLACREPSGQWVLTGVTSWGYGCGRPHFPGVYTRVAAVLGWIGQNIRE</sequence>
<proteinExistence type="inferred from homology"/>
<reference key="1">
    <citation type="journal article" date="2004" name="Nature">
        <title>Genome sequence of the Brown Norway rat yields insights into mammalian evolution.</title>
        <authorList>
            <person name="Gibbs R.A."/>
            <person name="Weinstock G.M."/>
            <person name="Metzker M.L."/>
            <person name="Muzny D.M."/>
            <person name="Sodergren E.J."/>
            <person name="Scherer S."/>
            <person name="Scott G."/>
            <person name="Steffen D."/>
            <person name="Worley K.C."/>
            <person name="Burch P.E."/>
            <person name="Okwuonu G."/>
            <person name="Hines S."/>
            <person name="Lewis L."/>
            <person name="Deramo C."/>
            <person name="Delgado O."/>
            <person name="Dugan-Rocha S."/>
            <person name="Miner G."/>
            <person name="Morgan M."/>
            <person name="Hawes A."/>
            <person name="Gill R."/>
            <person name="Holt R.A."/>
            <person name="Adams M.D."/>
            <person name="Amanatides P.G."/>
            <person name="Baden-Tillson H."/>
            <person name="Barnstead M."/>
            <person name="Chin S."/>
            <person name="Evans C.A."/>
            <person name="Ferriera S."/>
            <person name="Fosler C."/>
            <person name="Glodek A."/>
            <person name="Gu Z."/>
            <person name="Jennings D."/>
            <person name="Kraft C.L."/>
            <person name="Nguyen T."/>
            <person name="Pfannkoch C.M."/>
            <person name="Sitter C."/>
            <person name="Sutton G.G."/>
            <person name="Venter J.C."/>
            <person name="Woodage T."/>
            <person name="Smith D."/>
            <person name="Lee H.-M."/>
            <person name="Gustafson E."/>
            <person name="Cahill P."/>
            <person name="Kana A."/>
            <person name="Doucette-Stamm L."/>
            <person name="Weinstock K."/>
            <person name="Fechtel K."/>
            <person name="Weiss R.B."/>
            <person name="Dunn D.M."/>
            <person name="Green E.D."/>
            <person name="Blakesley R.W."/>
            <person name="Bouffard G.G."/>
            <person name="De Jong P.J."/>
            <person name="Osoegawa K."/>
            <person name="Zhu B."/>
            <person name="Marra M."/>
            <person name="Schein J."/>
            <person name="Bosdet I."/>
            <person name="Fjell C."/>
            <person name="Jones S."/>
            <person name="Krzywinski M."/>
            <person name="Mathewson C."/>
            <person name="Siddiqui A."/>
            <person name="Wye N."/>
            <person name="McPherson J."/>
            <person name="Zhao S."/>
            <person name="Fraser C.M."/>
            <person name="Shetty J."/>
            <person name="Shatsman S."/>
            <person name="Geer K."/>
            <person name="Chen Y."/>
            <person name="Abramzon S."/>
            <person name="Nierman W.C."/>
            <person name="Havlak P.H."/>
            <person name="Chen R."/>
            <person name="Durbin K.J."/>
            <person name="Egan A."/>
            <person name="Ren Y."/>
            <person name="Song X.-Z."/>
            <person name="Li B."/>
            <person name="Liu Y."/>
            <person name="Qin X."/>
            <person name="Cawley S."/>
            <person name="Cooney A.J."/>
            <person name="D'Souza L.M."/>
            <person name="Martin K."/>
            <person name="Wu J.Q."/>
            <person name="Gonzalez-Garay M.L."/>
            <person name="Jackson A.R."/>
            <person name="Kalafus K.J."/>
            <person name="McLeod M.P."/>
            <person name="Milosavljevic A."/>
            <person name="Virk D."/>
            <person name="Volkov A."/>
            <person name="Wheeler D.A."/>
            <person name="Zhang Z."/>
            <person name="Bailey J.A."/>
            <person name="Eichler E.E."/>
            <person name="Tuzun E."/>
            <person name="Birney E."/>
            <person name="Mongin E."/>
            <person name="Ureta-Vidal A."/>
            <person name="Woodwark C."/>
            <person name="Zdobnov E."/>
            <person name="Bork P."/>
            <person name="Suyama M."/>
            <person name="Torrents D."/>
            <person name="Alexandersson M."/>
            <person name="Trask B.J."/>
            <person name="Young J.M."/>
            <person name="Huang H."/>
            <person name="Wang H."/>
            <person name="Xing H."/>
            <person name="Daniels S."/>
            <person name="Gietzen D."/>
            <person name="Schmidt J."/>
            <person name="Stevens K."/>
            <person name="Vitt U."/>
            <person name="Wingrove J."/>
            <person name="Camara F."/>
            <person name="Mar Alba M."/>
            <person name="Abril J.F."/>
            <person name="Guigo R."/>
            <person name="Smit A."/>
            <person name="Dubchak I."/>
            <person name="Rubin E.M."/>
            <person name="Couronne O."/>
            <person name="Poliakov A."/>
            <person name="Huebner N."/>
            <person name="Ganten D."/>
            <person name="Goesele C."/>
            <person name="Hummel O."/>
            <person name="Kreitler T."/>
            <person name="Lee Y.-A."/>
            <person name="Monti J."/>
            <person name="Schulz H."/>
            <person name="Zimdahl H."/>
            <person name="Himmelbauer H."/>
            <person name="Lehrach H."/>
            <person name="Jacob H.J."/>
            <person name="Bromberg S."/>
            <person name="Gullings-Handley J."/>
            <person name="Jensen-Seaman M.I."/>
            <person name="Kwitek A.E."/>
            <person name="Lazar J."/>
            <person name="Pasko D."/>
            <person name="Tonellato P.J."/>
            <person name="Twigger S."/>
            <person name="Ponting C.P."/>
            <person name="Duarte J.M."/>
            <person name="Rice S."/>
            <person name="Goodstadt L."/>
            <person name="Beatson S.A."/>
            <person name="Emes R.D."/>
            <person name="Winter E.E."/>
            <person name="Webber C."/>
            <person name="Brandt P."/>
            <person name="Nyakatura G."/>
            <person name="Adetobi M."/>
            <person name="Chiaromonte F."/>
            <person name="Elnitski L."/>
            <person name="Eswara P."/>
            <person name="Hardison R.C."/>
            <person name="Hou M."/>
            <person name="Kolbe D."/>
            <person name="Makova K."/>
            <person name="Miller W."/>
            <person name="Nekrutenko A."/>
            <person name="Riemer C."/>
            <person name="Schwartz S."/>
            <person name="Taylor J."/>
            <person name="Yang S."/>
            <person name="Zhang Y."/>
            <person name="Lindpaintner K."/>
            <person name="Andrews T.D."/>
            <person name="Caccamo M."/>
            <person name="Clamp M."/>
            <person name="Clarke L."/>
            <person name="Curwen V."/>
            <person name="Durbin R.M."/>
            <person name="Eyras E."/>
            <person name="Searle S.M."/>
            <person name="Cooper G.M."/>
            <person name="Batzoglou S."/>
            <person name="Brudno M."/>
            <person name="Sidow A."/>
            <person name="Stone E.A."/>
            <person name="Payseur B.A."/>
            <person name="Bourque G."/>
            <person name="Lopez-Otin C."/>
            <person name="Puente X.S."/>
            <person name="Chakrabarti K."/>
            <person name="Chatterji S."/>
            <person name="Dewey C."/>
            <person name="Pachter L."/>
            <person name="Bray N."/>
            <person name="Yap V.B."/>
            <person name="Caspi A."/>
            <person name="Tesler G."/>
            <person name="Pevzner P.A."/>
            <person name="Haussler D."/>
            <person name="Roskin K.M."/>
            <person name="Baertsch R."/>
            <person name="Clawson H."/>
            <person name="Furey T.S."/>
            <person name="Hinrichs A.S."/>
            <person name="Karolchik D."/>
            <person name="Kent W.J."/>
            <person name="Rosenbloom K.R."/>
            <person name="Trumbower H."/>
            <person name="Weirauch M."/>
            <person name="Cooper D.N."/>
            <person name="Stenson P.D."/>
            <person name="Ma B."/>
            <person name="Brent M."/>
            <person name="Arumugam M."/>
            <person name="Shteynberg D."/>
            <person name="Copley R.R."/>
            <person name="Taylor M.S."/>
            <person name="Riethman H."/>
            <person name="Mudunuri U."/>
            <person name="Peterson J."/>
            <person name="Guyer M."/>
            <person name="Felsenfeld A."/>
            <person name="Old S."/>
            <person name="Mockrin S."/>
            <person name="Collins F.S."/>
        </authorList>
    </citation>
    <scope>NUCLEOTIDE SEQUENCE [LARGE SCALE GENOMIC DNA]</scope>
    <source>
        <strain>Brown Norway</strain>
    </source>
</reference>
<reference key="2">
    <citation type="journal article" date="2003" name="Proc. Natl. Acad. Sci. U.S.A.">
        <title>Polyserase-I, a human polyprotease with the ability to generate independent serine protease domains from a single translation product.</title>
        <authorList>
            <person name="Cal S."/>
            <person name="Quesada V."/>
            <person name="Garabaya C."/>
            <person name="Lopez-Otin C."/>
        </authorList>
    </citation>
    <scope>IDENTIFICATION</scope>
</reference>
<organism>
    <name type="scientific">Rattus norvegicus</name>
    <name type="common">Rat</name>
    <dbReference type="NCBI Taxonomy" id="10116"/>
    <lineage>
        <taxon>Eukaryota</taxon>
        <taxon>Metazoa</taxon>
        <taxon>Chordata</taxon>
        <taxon>Craniata</taxon>
        <taxon>Vertebrata</taxon>
        <taxon>Euteleostomi</taxon>
        <taxon>Mammalia</taxon>
        <taxon>Eutheria</taxon>
        <taxon>Euarchontoglires</taxon>
        <taxon>Glires</taxon>
        <taxon>Rodentia</taxon>
        <taxon>Myomorpha</taxon>
        <taxon>Muroidea</taxon>
        <taxon>Muridae</taxon>
        <taxon>Murinae</taxon>
        <taxon>Rattus</taxon>
    </lineage>
</organism>